<name>CITD_SALAR</name>
<dbReference type="EMBL" id="CP000880">
    <property type="protein sequence ID" value="ABX22175.1"/>
    <property type="molecule type" value="Genomic_DNA"/>
</dbReference>
<dbReference type="SMR" id="A9MKF6"/>
<dbReference type="STRING" id="41514.SARI_02312"/>
<dbReference type="KEGG" id="ses:SARI_02312"/>
<dbReference type="HOGENOM" id="CLU_158489_0_0_6"/>
<dbReference type="Proteomes" id="UP000002084">
    <property type="component" value="Chromosome"/>
</dbReference>
<dbReference type="GO" id="GO:0005737">
    <property type="term" value="C:cytoplasm"/>
    <property type="evidence" value="ECO:0007669"/>
    <property type="project" value="UniProtKB-SubCell"/>
</dbReference>
<dbReference type="HAMAP" id="MF_00805">
    <property type="entry name" value="CitD"/>
    <property type="match status" value="1"/>
</dbReference>
<dbReference type="InterPro" id="IPR006495">
    <property type="entry name" value="CitD"/>
</dbReference>
<dbReference type="InterPro" id="IPR023439">
    <property type="entry name" value="Mal_deCO2ase/Cit_lyase_ACP"/>
</dbReference>
<dbReference type="NCBIfam" id="TIGR01608">
    <property type="entry name" value="citD"/>
    <property type="match status" value="1"/>
</dbReference>
<dbReference type="NCBIfam" id="NF009726">
    <property type="entry name" value="PRK13253.1"/>
    <property type="match status" value="1"/>
</dbReference>
<dbReference type="Pfam" id="PF06857">
    <property type="entry name" value="ACP"/>
    <property type="match status" value="1"/>
</dbReference>
<dbReference type="PIRSF" id="PIRSF002736">
    <property type="entry name" value="Citrt_lyas_gamma"/>
    <property type="match status" value="1"/>
</dbReference>
<accession>A9MKF6</accession>
<evidence type="ECO:0000255" key="1">
    <source>
        <dbReference type="HAMAP-Rule" id="MF_00805"/>
    </source>
</evidence>
<keyword id="KW-0963">Cytoplasm</keyword>
<keyword id="KW-0597">Phosphoprotein</keyword>
<keyword id="KW-1185">Reference proteome</keyword>
<protein>
    <recommendedName>
        <fullName evidence="1">Citrate lyase acyl carrier protein</fullName>
    </recommendedName>
    <alternativeName>
        <fullName evidence="1">Citrate lyase gamma chain</fullName>
    </alternativeName>
</protein>
<organism>
    <name type="scientific">Salmonella arizonae (strain ATCC BAA-731 / CDC346-86 / RSK2980)</name>
    <dbReference type="NCBI Taxonomy" id="41514"/>
    <lineage>
        <taxon>Bacteria</taxon>
        <taxon>Pseudomonadati</taxon>
        <taxon>Pseudomonadota</taxon>
        <taxon>Gammaproteobacteria</taxon>
        <taxon>Enterobacterales</taxon>
        <taxon>Enterobacteriaceae</taxon>
        <taxon>Salmonella</taxon>
    </lineage>
</organism>
<proteinExistence type="inferred from homology"/>
<reference key="1">
    <citation type="submission" date="2007-11" db="EMBL/GenBank/DDBJ databases">
        <authorList>
            <consortium name="The Salmonella enterica serovar Arizonae Genome Sequencing Project"/>
            <person name="McClelland M."/>
            <person name="Sanderson E.K."/>
            <person name="Porwollik S."/>
            <person name="Spieth J."/>
            <person name="Clifton W.S."/>
            <person name="Fulton R."/>
            <person name="Chunyan W."/>
            <person name="Wollam A."/>
            <person name="Shah N."/>
            <person name="Pepin K."/>
            <person name="Bhonagiri V."/>
            <person name="Nash W."/>
            <person name="Johnson M."/>
            <person name="Thiruvilangam P."/>
            <person name="Wilson R."/>
        </authorList>
    </citation>
    <scope>NUCLEOTIDE SEQUENCE [LARGE SCALE GENOMIC DNA]</scope>
    <source>
        <strain>ATCC BAA-731 / CDC346-86 / RSK2980</strain>
    </source>
</reference>
<sequence>MKINQLAVAGTLESGDVMIRIAPLDTQDIDLQINSSVEKQFGEAIRATILEVLSRYDVRGVQLNVDDKGALDCILRARLETLLARASGIAALPWEDRQ</sequence>
<feature type="chain" id="PRO_1000083712" description="Citrate lyase acyl carrier protein">
    <location>
        <begin position="1"/>
        <end position="98"/>
    </location>
</feature>
<feature type="modified residue" description="O-(phosphoribosyl dephospho-coenzyme A)serine" evidence="1">
    <location>
        <position position="14"/>
    </location>
</feature>
<gene>
    <name evidence="1" type="primary">citD</name>
    <name type="ordered locus">SARI_02312</name>
</gene>
<comment type="function">
    <text evidence="1">Covalent carrier of the coenzyme of citrate lyase.</text>
</comment>
<comment type="subunit">
    <text evidence="1">Oligomer with a subunit composition of (alpha,beta,gamma)6.</text>
</comment>
<comment type="subcellular location">
    <subcellularLocation>
        <location evidence="1">Cytoplasm</location>
    </subcellularLocation>
</comment>
<comment type="similarity">
    <text evidence="1">Belongs to the CitD family.</text>
</comment>